<reference key="1">
    <citation type="journal article" date="2008" name="Genome Biol.">
        <title>A genomic analysis of the archaeal system Ignicoccus hospitalis-Nanoarchaeum equitans.</title>
        <authorList>
            <person name="Podar M."/>
            <person name="Anderson I."/>
            <person name="Makarova K.S."/>
            <person name="Elkins J.G."/>
            <person name="Ivanova N."/>
            <person name="Wall M.A."/>
            <person name="Lykidis A."/>
            <person name="Mavromatis K."/>
            <person name="Sun H."/>
            <person name="Hudson M.E."/>
            <person name="Chen W."/>
            <person name="Deciu C."/>
            <person name="Hutchison D."/>
            <person name="Eads J.R."/>
            <person name="Anderson A."/>
            <person name="Fernandes F."/>
            <person name="Szeto E."/>
            <person name="Lapidus A."/>
            <person name="Kyrpides N.C."/>
            <person name="Saier M.H. Jr."/>
            <person name="Richardson P.M."/>
            <person name="Rachel R."/>
            <person name="Huber H."/>
            <person name="Eisen J.A."/>
            <person name="Koonin E.V."/>
            <person name="Keller M."/>
            <person name="Stetter K.O."/>
        </authorList>
    </citation>
    <scope>NUCLEOTIDE SEQUENCE [LARGE SCALE GENOMIC DNA]</scope>
    <source>
        <strain>KIN4/I / DSM 18386 / JCM 14125</strain>
    </source>
</reference>
<evidence type="ECO:0000255" key="1">
    <source>
        <dbReference type="HAMAP-Rule" id="MF_00012"/>
    </source>
</evidence>
<dbReference type="EC" id="4.2.1.9" evidence="1"/>
<dbReference type="EMBL" id="CP000816">
    <property type="protein sequence ID" value="ABU82141.1"/>
    <property type="molecule type" value="Genomic_DNA"/>
</dbReference>
<dbReference type="RefSeq" id="WP_012123105.1">
    <property type="nucleotide sequence ID" value="NC_009776.1"/>
</dbReference>
<dbReference type="SMR" id="A8AB39"/>
<dbReference type="STRING" id="453591.Igni_0961"/>
<dbReference type="GeneID" id="5562278"/>
<dbReference type="KEGG" id="iho:Igni_0961"/>
<dbReference type="eggNOG" id="arCOG04045">
    <property type="taxonomic scope" value="Archaea"/>
</dbReference>
<dbReference type="HOGENOM" id="CLU_014271_4_2_2"/>
<dbReference type="OrthoDB" id="8674at2157"/>
<dbReference type="PhylomeDB" id="A8AB39"/>
<dbReference type="UniPathway" id="UPA00047">
    <property type="reaction ID" value="UER00057"/>
</dbReference>
<dbReference type="UniPathway" id="UPA00049">
    <property type="reaction ID" value="UER00061"/>
</dbReference>
<dbReference type="Proteomes" id="UP000000262">
    <property type="component" value="Chromosome"/>
</dbReference>
<dbReference type="GO" id="GO:0005829">
    <property type="term" value="C:cytosol"/>
    <property type="evidence" value="ECO:0007669"/>
    <property type="project" value="TreeGrafter"/>
</dbReference>
<dbReference type="GO" id="GO:0051537">
    <property type="term" value="F:2 iron, 2 sulfur cluster binding"/>
    <property type="evidence" value="ECO:0007669"/>
    <property type="project" value="UniProtKB-UniRule"/>
</dbReference>
<dbReference type="GO" id="GO:0004160">
    <property type="term" value="F:dihydroxy-acid dehydratase activity"/>
    <property type="evidence" value="ECO:0007669"/>
    <property type="project" value="UniProtKB-UniRule"/>
</dbReference>
<dbReference type="GO" id="GO:0000287">
    <property type="term" value="F:magnesium ion binding"/>
    <property type="evidence" value="ECO:0007669"/>
    <property type="project" value="UniProtKB-UniRule"/>
</dbReference>
<dbReference type="GO" id="GO:0009097">
    <property type="term" value="P:isoleucine biosynthetic process"/>
    <property type="evidence" value="ECO:0007669"/>
    <property type="project" value="UniProtKB-UniRule"/>
</dbReference>
<dbReference type="GO" id="GO:0009099">
    <property type="term" value="P:L-valine biosynthetic process"/>
    <property type="evidence" value="ECO:0007669"/>
    <property type="project" value="UniProtKB-UniRule"/>
</dbReference>
<dbReference type="FunFam" id="3.50.30.80:FF:000001">
    <property type="entry name" value="Dihydroxy-acid dehydratase"/>
    <property type="match status" value="1"/>
</dbReference>
<dbReference type="Gene3D" id="3.50.30.80">
    <property type="entry name" value="IlvD/EDD C-terminal domain-like"/>
    <property type="match status" value="1"/>
</dbReference>
<dbReference type="HAMAP" id="MF_00012">
    <property type="entry name" value="IlvD"/>
    <property type="match status" value="1"/>
</dbReference>
<dbReference type="InterPro" id="IPR042096">
    <property type="entry name" value="Dihydro-acid_dehy_C"/>
</dbReference>
<dbReference type="InterPro" id="IPR004404">
    <property type="entry name" value="DihydroxyA_deHydtase"/>
</dbReference>
<dbReference type="InterPro" id="IPR020558">
    <property type="entry name" value="DiOHA_6PGluconate_deHydtase_CS"/>
</dbReference>
<dbReference type="InterPro" id="IPR056740">
    <property type="entry name" value="ILV_EDD_C"/>
</dbReference>
<dbReference type="InterPro" id="IPR000581">
    <property type="entry name" value="ILV_EDD_N"/>
</dbReference>
<dbReference type="InterPro" id="IPR037237">
    <property type="entry name" value="IlvD/EDD_N"/>
</dbReference>
<dbReference type="NCBIfam" id="TIGR00110">
    <property type="entry name" value="ilvD"/>
    <property type="match status" value="1"/>
</dbReference>
<dbReference type="NCBIfam" id="NF002068">
    <property type="entry name" value="PRK00911.1"/>
    <property type="match status" value="1"/>
</dbReference>
<dbReference type="PANTHER" id="PTHR43661">
    <property type="entry name" value="D-XYLONATE DEHYDRATASE"/>
    <property type="match status" value="1"/>
</dbReference>
<dbReference type="PANTHER" id="PTHR43661:SF3">
    <property type="entry name" value="D-XYLONATE DEHYDRATASE YAGF-RELATED"/>
    <property type="match status" value="1"/>
</dbReference>
<dbReference type="Pfam" id="PF24877">
    <property type="entry name" value="ILV_EDD_C"/>
    <property type="match status" value="1"/>
</dbReference>
<dbReference type="Pfam" id="PF00920">
    <property type="entry name" value="ILVD_EDD_N"/>
    <property type="match status" value="1"/>
</dbReference>
<dbReference type="SUPFAM" id="SSF143975">
    <property type="entry name" value="IlvD/EDD N-terminal domain-like"/>
    <property type="match status" value="1"/>
</dbReference>
<dbReference type="SUPFAM" id="SSF52016">
    <property type="entry name" value="LeuD/IlvD-like"/>
    <property type="match status" value="1"/>
</dbReference>
<dbReference type="PROSITE" id="PS00886">
    <property type="entry name" value="ILVD_EDD_1"/>
    <property type="match status" value="1"/>
</dbReference>
<dbReference type="PROSITE" id="PS00887">
    <property type="entry name" value="ILVD_EDD_2"/>
    <property type="match status" value="1"/>
</dbReference>
<keyword id="KW-0001">2Fe-2S</keyword>
<keyword id="KW-0028">Amino-acid biosynthesis</keyword>
<keyword id="KW-0100">Branched-chain amino acid biosynthesis</keyword>
<keyword id="KW-0408">Iron</keyword>
<keyword id="KW-0411">Iron-sulfur</keyword>
<keyword id="KW-0456">Lyase</keyword>
<keyword id="KW-0460">Magnesium</keyword>
<keyword id="KW-0479">Metal-binding</keyword>
<keyword id="KW-1185">Reference proteome</keyword>
<comment type="function">
    <text evidence="1">Functions in the biosynthesis of branched-chain amino acids. Catalyzes the dehydration of (2R,3R)-2,3-dihydroxy-3-methylpentanoate (2,3-dihydroxy-3-methylvalerate) into 2-oxo-3-methylpentanoate (2-oxo-3-methylvalerate) and of (2R)-2,3-dihydroxy-3-methylbutanoate (2,3-dihydroxyisovalerate) into 2-oxo-3-methylbutanoate (2-oxoisovalerate), the penultimate precursor to L-isoleucine and L-valine, respectively.</text>
</comment>
<comment type="catalytic activity">
    <reaction evidence="1">
        <text>(2R)-2,3-dihydroxy-3-methylbutanoate = 3-methyl-2-oxobutanoate + H2O</text>
        <dbReference type="Rhea" id="RHEA:24809"/>
        <dbReference type="ChEBI" id="CHEBI:11851"/>
        <dbReference type="ChEBI" id="CHEBI:15377"/>
        <dbReference type="ChEBI" id="CHEBI:49072"/>
        <dbReference type="EC" id="4.2.1.9"/>
    </reaction>
    <physiologicalReaction direction="left-to-right" evidence="1">
        <dbReference type="Rhea" id="RHEA:24810"/>
    </physiologicalReaction>
</comment>
<comment type="catalytic activity">
    <reaction evidence="1">
        <text>(2R,3R)-2,3-dihydroxy-3-methylpentanoate = (S)-3-methyl-2-oxopentanoate + H2O</text>
        <dbReference type="Rhea" id="RHEA:27694"/>
        <dbReference type="ChEBI" id="CHEBI:15377"/>
        <dbReference type="ChEBI" id="CHEBI:35146"/>
        <dbReference type="ChEBI" id="CHEBI:49258"/>
        <dbReference type="EC" id="4.2.1.9"/>
    </reaction>
    <physiologicalReaction direction="left-to-right" evidence="1">
        <dbReference type="Rhea" id="RHEA:27695"/>
    </physiologicalReaction>
</comment>
<comment type="cofactor">
    <cofactor evidence="1">
        <name>[2Fe-2S] cluster</name>
        <dbReference type="ChEBI" id="CHEBI:190135"/>
    </cofactor>
    <text evidence="1">Binds 1 [2Fe-2S] cluster per subunit. This cluster acts as a Lewis acid cofactor.</text>
</comment>
<comment type="cofactor">
    <cofactor evidence="1">
        <name>Mg(2+)</name>
        <dbReference type="ChEBI" id="CHEBI:18420"/>
    </cofactor>
</comment>
<comment type="pathway">
    <text evidence="1">Amino-acid biosynthesis; L-isoleucine biosynthesis; L-isoleucine from 2-oxobutanoate: step 3/4.</text>
</comment>
<comment type="pathway">
    <text evidence="1">Amino-acid biosynthesis; L-valine biosynthesis; L-valine from pyruvate: step 3/4.</text>
</comment>
<comment type="subunit">
    <text evidence="1">Homodimer.</text>
</comment>
<comment type="similarity">
    <text evidence="1">Belongs to the IlvD/Edd family.</text>
</comment>
<protein>
    <recommendedName>
        <fullName evidence="1">Dihydroxy-acid dehydratase</fullName>
        <shortName evidence="1">DAD</shortName>
        <ecNumber evidence="1">4.2.1.9</ecNumber>
    </recommendedName>
</protein>
<proteinExistence type="inferred from homology"/>
<gene>
    <name evidence="1" type="primary">ilvD</name>
    <name type="ordered locus">Igni_0961</name>
</gene>
<organism>
    <name type="scientific">Ignicoccus hospitalis (strain KIN4/I / DSM 18386 / JCM 14125)</name>
    <dbReference type="NCBI Taxonomy" id="453591"/>
    <lineage>
        <taxon>Archaea</taxon>
        <taxon>Thermoproteota</taxon>
        <taxon>Thermoprotei</taxon>
        <taxon>Desulfurococcales</taxon>
        <taxon>Desulfurococcaceae</taxon>
        <taxon>Ignicoccus</taxon>
    </lineage>
</organism>
<sequence length="552" mass="59728">MKRSDVFLRPEYAPHRALWRASGLIDEELRRPLIGVANSWNEIVPGHVHLDKVAEAVKAGIRMAGGTPLEFGTIAVCDGIAMGHEGMRYSLPSREVIADTVEIMVEAHRLDAVVMVTNCDKITPGFLLAAARLEVPVILINGGPMMPGVYGKERIDFKDLMERMNVLIKEGRTEELRKLEESALPGPGSCAGLFTANTMNMLSEAMGLMLPGASTVPAVEARRLWYAKLTGMRIVKMVEEGLTPDKILTRKALENAIAVDMALGGSTNSVLHLEALAYELGIDLPLEVFDEISRKVPHIASISPSGRHFVVDLDRAGGIPAVLKELGEAGLIHKDALTVTGKTVWENVKDAAVLDREVIRPLDNPYSPFGGLAILKGSLAPNGAVVKASAVKRELWKFKGVARVFDREEDAVKAIRGGEIEPGTVIVIRYEGPRGGPGMREMLTATAAVMALGLGDKVALVTDGRFSGATRGPAIGHVSPEAAAGGPIALVQDGDEIVIDIEKRRLDLLVDEKELEERRARWKPKVKPLRRGILRRYAKMALSADKGGALEY</sequence>
<feature type="chain" id="PRO_1000000994" description="Dihydroxy-acid dehydratase">
    <location>
        <begin position="1"/>
        <end position="552"/>
    </location>
</feature>
<feature type="active site" description="Proton acceptor" evidence="1">
    <location>
        <position position="467"/>
    </location>
</feature>
<feature type="binding site" evidence="1">
    <location>
        <position position="78"/>
    </location>
    <ligand>
        <name>Mg(2+)</name>
        <dbReference type="ChEBI" id="CHEBI:18420"/>
    </ligand>
</feature>
<feature type="binding site" evidence="1">
    <location>
        <position position="119"/>
    </location>
    <ligand>
        <name>[2Fe-2S] cluster</name>
        <dbReference type="ChEBI" id="CHEBI:190135"/>
    </ligand>
</feature>
<feature type="binding site" evidence="1">
    <location>
        <position position="120"/>
    </location>
    <ligand>
        <name>Mg(2+)</name>
        <dbReference type="ChEBI" id="CHEBI:18420"/>
    </ligand>
</feature>
<feature type="binding site" description="via carbamate group" evidence="1">
    <location>
        <position position="121"/>
    </location>
    <ligand>
        <name>Mg(2+)</name>
        <dbReference type="ChEBI" id="CHEBI:18420"/>
    </ligand>
</feature>
<feature type="binding site" evidence="1">
    <location>
        <position position="190"/>
    </location>
    <ligand>
        <name>[2Fe-2S] cluster</name>
        <dbReference type="ChEBI" id="CHEBI:190135"/>
    </ligand>
</feature>
<feature type="binding site" evidence="1">
    <location>
        <position position="441"/>
    </location>
    <ligand>
        <name>Mg(2+)</name>
        <dbReference type="ChEBI" id="CHEBI:18420"/>
    </ligand>
</feature>
<feature type="modified residue" description="N6-carboxylysine" evidence="1">
    <location>
        <position position="121"/>
    </location>
</feature>
<accession>A8AB39</accession>
<name>ILVD_IGNH4</name>